<reference key="1">
    <citation type="journal article" date="2005" name="Nat. Biotechnol.">
        <title>The complete genome sequence of the meat-borne lactic acid bacterium Lactobacillus sakei 23K.</title>
        <authorList>
            <person name="Chaillou S."/>
            <person name="Champomier-Verges M.-C."/>
            <person name="Cornet M."/>
            <person name="Crutz-Le Coq A.-M."/>
            <person name="Dudez A.-M."/>
            <person name="Martin V."/>
            <person name="Beaufils S."/>
            <person name="Darbon-Rongere E."/>
            <person name="Bossy R."/>
            <person name="Loux V."/>
            <person name="Zagorec M."/>
        </authorList>
    </citation>
    <scope>NUCLEOTIDE SEQUENCE [LARGE SCALE GENOMIC DNA]</scope>
    <source>
        <strain>23K</strain>
    </source>
</reference>
<keyword id="KW-1185">Reference proteome</keyword>
<keyword id="KW-0678">Repressor</keyword>
<keyword id="KW-0346">Stress response</keyword>
<keyword id="KW-0804">Transcription</keyword>
<keyword id="KW-0805">Transcription regulation</keyword>
<sequence>MLTERQLMILKEIIRLFTESGQPVGSKKLMSELPMHVSSATIRNDMADLENVGLIEKTHSSSGRVPSMKGYRYYLDHLIQPAVLNPMDVATVQQSFGRHYHKIDEIVSQSANILSNLTSYTAITLGPEMAAIRLTGFRLVPLGNHQVMAIIVTSAGTVDNQVFTIPNAISGDELEKAIRVVNDHLIGLPLTVVSQKLKIEVPALLMQYMGSPGGFLNIFDDVLKQASQERLYVGGQSNLLNFSELTDVSQLKSIYNIINQSDDLAKLLELSPGEANSQVQVRLGNEMTNDLLKNYSLMTVNYDVGEHGQGLIALLGPTSMPYSRMIGLLDLFREELAKKLIDYYADFDDSQS</sequence>
<accession>Q38W91</accession>
<proteinExistence type="inferred from homology"/>
<protein>
    <recommendedName>
        <fullName evidence="1">Heat-inducible transcription repressor HrcA</fullName>
    </recommendedName>
</protein>
<evidence type="ECO:0000255" key="1">
    <source>
        <dbReference type="HAMAP-Rule" id="MF_00081"/>
    </source>
</evidence>
<organism>
    <name type="scientific">Latilactobacillus sakei subsp. sakei (strain 23K)</name>
    <name type="common">Lactobacillus sakei subsp. sakei</name>
    <dbReference type="NCBI Taxonomy" id="314315"/>
    <lineage>
        <taxon>Bacteria</taxon>
        <taxon>Bacillati</taxon>
        <taxon>Bacillota</taxon>
        <taxon>Bacilli</taxon>
        <taxon>Lactobacillales</taxon>
        <taxon>Lactobacillaceae</taxon>
        <taxon>Latilactobacillus</taxon>
    </lineage>
</organism>
<comment type="function">
    <text evidence="1">Negative regulator of class I heat shock genes (grpE-dnaK-dnaJ and groELS operons). Prevents heat-shock induction of these operons.</text>
</comment>
<comment type="similarity">
    <text evidence="1">Belongs to the HrcA family.</text>
</comment>
<dbReference type="EMBL" id="CR936503">
    <property type="protein sequence ID" value="CAI55542.1"/>
    <property type="molecule type" value="Genomic_DNA"/>
</dbReference>
<dbReference type="RefSeq" id="WP_011374935.1">
    <property type="nucleotide sequence ID" value="NC_007576.1"/>
</dbReference>
<dbReference type="SMR" id="Q38W91"/>
<dbReference type="STRING" id="314315.LCA_1238"/>
<dbReference type="KEGG" id="lsa:LCA_1238"/>
<dbReference type="eggNOG" id="COG1420">
    <property type="taxonomic scope" value="Bacteria"/>
</dbReference>
<dbReference type="HOGENOM" id="CLU_050019_1_0_9"/>
<dbReference type="OrthoDB" id="9783139at2"/>
<dbReference type="Proteomes" id="UP000002707">
    <property type="component" value="Chromosome"/>
</dbReference>
<dbReference type="GO" id="GO:0003677">
    <property type="term" value="F:DNA binding"/>
    <property type="evidence" value="ECO:0007669"/>
    <property type="project" value="InterPro"/>
</dbReference>
<dbReference type="GO" id="GO:0045892">
    <property type="term" value="P:negative regulation of DNA-templated transcription"/>
    <property type="evidence" value="ECO:0007669"/>
    <property type="project" value="UniProtKB-UniRule"/>
</dbReference>
<dbReference type="Gene3D" id="3.30.450.40">
    <property type="match status" value="1"/>
</dbReference>
<dbReference type="Gene3D" id="3.30.390.60">
    <property type="entry name" value="Heat-inducible transcription repressor hrca homolog, domain 3"/>
    <property type="match status" value="1"/>
</dbReference>
<dbReference type="Gene3D" id="1.10.10.10">
    <property type="entry name" value="Winged helix-like DNA-binding domain superfamily/Winged helix DNA-binding domain"/>
    <property type="match status" value="1"/>
</dbReference>
<dbReference type="HAMAP" id="MF_00081">
    <property type="entry name" value="HrcA"/>
    <property type="match status" value="1"/>
</dbReference>
<dbReference type="InterPro" id="IPR029016">
    <property type="entry name" value="GAF-like_dom_sf"/>
</dbReference>
<dbReference type="InterPro" id="IPR002571">
    <property type="entry name" value="HrcA"/>
</dbReference>
<dbReference type="InterPro" id="IPR021153">
    <property type="entry name" value="HrcA_C"/>
</dbReference>
<dbReference type="InterPro" id="IPR036388">
    <property type="entry name" value="WH-like_DNA-bd_sf"/>
</dbReference>
<dbReference type="InterPro" id="IPR036390">
    <property type="entry name" value="WH_DNA-bd_sf"/>
</dbReference>
<dbReference type="InterPro" id="IPR005104">
    <property type="entry name" value="WHTH_HrcA_DNA-bd"/>
</dbReference>
<dbReference type="InterPro" id="IPR023120">
    <property type="entry name" value="WHTH_transcript_rep_HrcA_IDD"/>
</dbReference>
<dbReference type="NCBIfam" id="TIGR00331">
    <property type="entry name" value="hrcA"/>
    <property type="match status" value="1"/>
</dbReference>
<dbReference type="PANTHER" id="PTHR34824">
    <property type="entry name" value="HEAT-INDUCIBLE TRANSCRIPTION REPRESSOR HRCA"/>
    <property type="match status" value="1"/>
</dbReference>
<dbReference type="PANTHER" id="PTHR34824:SF1">
    <property type="entry name" value="HEAT-INDUCIBLE TRANSCRIPTION REPRESSOR HRCA"/>
    <property type="match status" value="1"/>
</dbReference>
<dbReference type="Pfam" id="PF01628">
    <property type="entry name" value="HrcA"/>
    <property type="match status" value="1"/>
</dbReference>
<dbReference type="Pfam" id="PF03444">
    <property type="entry name" value="HrcA_DNA-bdg"/>
    <property type="match status" value="1"/>
</dbReference>
<dbReference type="PIRSF" id="PIRSF005485">
    <property type="entry name" value="HrcA"/>
    <property type="match status" value="1"/>
</dbReference>
<dbReference type="SUPFAM" id="SSF55781">
    <property type="entry name" value="GAF domain-like"/>
    <property type="match status" value="1"/>
</dbReference>
<dbReference type="SUPFAM" id="SSF46785">
    <property type="entry name" value="Winged helix' DNA-binding domain"/>
    <property type="match status" value="1"/>
</dbReference>
<gene>
    <name evidence="1" type="primary">hrcA</name>
    <name type="ordered locus">LCA_1238</name>
</gene>
<name>HRCA_LATSS</name>
<feature type="chain" id="PRO_1000010416" description="Heat-inducible transcription repressor HrcA">
    <location>
        <begin position="1"/>
        <end position="352"/>
    </location>
</feature>